<organism>
    <name type="scientific">Shewanella piezotolerans (strain WP3 / JCM 13877)</name>
    <dbReference type="NCBI Taxonomy" id="225849"/>
    <lineage>
        <taxon>Bacteria</taxon>
        <taxon>Pseudomonadati</taxon>
        <taxon>Pseudomonadota</taxon>
        <taxon>Gammaproteobacteria</taxon>
        <taxon>Alteromonadales</taxon>
        <taxon>Shewanellaceae</taxon>
        <taxon>Shewanella</taxon>
    </lineage>
</organism>
<protein>
    <recommendedName>
        <fullName evidence="1">Elongation factor 4</fullName>
        <shortName evidence="1">EF-4</shortName>
        <ecNumber evidence="1">3.6.5.n1</ecNumber>
    </recommendedName>
    <alternativeName>
        <fullName evidence="1">Ribosomal back-translocase LepA</fullName>
    </alternativeName>
</protein>
<name>LEPA_SHEPW</name>
<keyword id="KW-0997">Cell inner membrane</keyword>
<keyword id="KW-1003">Cell membrane</keyword>
<keyword id="KW-0342">GTP-binding</keyword>
<keyword id="KW-0378">Hydrolase</keyword>
<keyword id="KW-0472">Membrane</keyword>
<keyword id="KW-0547">Nucleotide-binding</keyword>
<keyword id="KW-0648">Protein biosynthesis</keyword>
<feature type="chain" id="PRO_1000117032" description="Elongation factor 4">
    <location>
        <begin position="1"/>
        <end position="596"/>
    </location>
</feature>
<feature type="domain" description="tr-type G">
    <location>
        <begin position="2"/>
        <end position="184"/>
    </location>
</feature>
<feature type="binding site" evidence="1">
    <location>
        <begin position="14"/>
        <end position="19"/>
    </location>
    <ligand>
        <name>GTP</name>
        <dbReference type="ChEBI" id="CHEBI:37565"/>
    </ligand>
</feature>
<feature type="binding site" evidence="1">
    <location>
        <begin position="131"/>
        <end position="134"/>
    </location>
    <ligand>
        <name>GTP</name>
        <dbReference type="ChEBI" id="CHEBI:37565"/>
    </ligand>
</feature>
<dbReference type="EC" id="3.6.5.n1" evidence="1"/>
<dbReference type="EMBL" id="CP000472">
    <property type="protein sequence ID" value="ACJ30463.1"/>
    <property type="molecule type" value="Genomic_DNA"/>
</dbReference>
<dbReference type="RefSeq" id="WP_020913807.1">
    <property type="nucleotide sequence ID" value="NC_011566.1"/>
</dbReference>
<dbReference type="SMR" id="B8CQJ7"/>
<dbReference type="STRING" id="225849.swp_3782"/>
<dbReference type="KEGG" id="swp:swp_3782"/>
<dbReference type="eggNOG" id="COG0481">
    <property type="taxonomic scope" value="Bacteria"/>
</dbReference>
<dbReference type="HOGENOM" id="CLU_009995_3_3_6"/>
<dbReference type="OrthoDB" id="9804431at2"/>
<dbReference type="Proteomes" id="UP000000753">
    <property type="component" value="Chromosome"/>
</dbReference>
<dbReference type="GO" id="GO:0005886">
    <property type="term" value="C:plasma membrane"/>
    <property type="evidence" value="ECO:0007669"/>
    <property type="project" value="UniProtKB-SubCell"/>
</dbReference>
<dbReference type="GO" id="GO:0005525">
    <property type="term" value="F:GTP binding"/>
    <property type="evidence" value="ECO:0007669"/>
    <property type="project" value="UniProtKB-UniRule"/>
</dbReference>
<dbReference type="GO" id="GO:0003924">
    <property type="term" value="F:GTPase activity"/>
    <property type="evidence" value="ECO:0007669"/>
    <property type="project" value="UniProtKB-UniRule"/>
</dbReference>
<dbReference type="GO" id="GO:0097216">
    <property type="term" value="F:guanosine tetraphosphate binding"/>
    <property type="evidence" value="ECO:0007669"/>
    <property type="project" value="UniProtKB-ARBA"/>
</dbReference>
<dbReference type="GO" id="GO:0043022">
    <property type="term" value="F:ribosome binding"/>
    <property type="evidence" value="ECO:0007669"/>
    <property type="project" value="UniProtKB-UniRule"/>
</dbReference>
<dbReference type="GO" id="GO:0003746">
    <property type="term" value="F:translation elongation factor activity"/>
    <property type="evidence" value="ECO:0007669"/>
    <property type="project" value="UniProtKB-UniRule"/>
</dbReference>
<dbReference type="GO" id="GO:0045727">
    <property type="term" value="P:positive regulation of translation"/>
    <property type="evidence" value="ECO:0007669"/>
    <property type="project" value="UniProtKB-UniRule"/>
</dbReference>
<dbReference type="CDD" id="cd03699">
    <property type="entry name" value="EF4_II"/>
    <property type="match status" value="1"/>
</dbReference>
<dbReference type="CDD" id="cd16260">
    <property type="entry name" value="EF4_III"/>
    <property type="match status" value="1"/>
</dbReference>
<dbReference type="CDD" id="cd01890">
    <property type="entry name" value="LepA"/>
    <property type="match status" value="1"/>
</dbReference>
<dbReference type="CDD" id="cd03709">
    <property type="entry name" value="lepA_C"/>
    <property type="match status" value="1"/>
</dbReference>
<dbReference type="FunFam" id="3.40.50.300:FF:000078">
    <property type="entry name" value="Elongation factor 4"/>
    <property type="match status" value="1"/>
</dbReference>
<dbReference type="FunFam" id="2.40.30.10:FF:000015">
    <property type="entry name" value="Translation factor GUF1, mitochondrial"/>
    <property type="match status" value="1"/>
</dbReference>
<dbReference type="FunFam" id="3.30.70.240:FF:000007">
    <property type="entry name" value="Translation factor GUF1, mitochondrial"/>
    <property type="match status" value="1"/>
</dbReference>
<dbReference type="FunFam" id="3.30.70.2570:FF:000001">
    <property type="entry name" value="Translation factor GUF1, mitochondrial"/>
    <property type="match status" value="1"/>
</dbReference>
<dbReference type="FunFam" id="3.30.70.870:FF:000004">
    <property type="entry name" value="Translation factor GUF1, mitochondrial"/>
    <property type="match status" value="1"/>
</dbReference>
<dbReference type="Gene3D" id="3.30.70.240">
    <property type="match status" value="1"/>
</dbReference>
<dbReference type="Gene3D" id="3.30.70.2570">
    <property type="entry name" value="Elongation factor 4, C-terminal domain"/>
    <property type="match status" value="1"/>
</dbReference>
<dbReference type="Gene3D" id="3.30.70.870">
    <property type="entry name" value="Elongation Factor G (Translational Gtpase), domain 3"/>
    <property type="match status" value="1"/>
</dbReference>
<dbReference type="Gene3D" id="3.40.50.300">
    <property type="entry name" value="P-loop containing nucleotide triphosphate hydrolases"/>
    <property type="match status" value="1"/>
</dbReference>
<dbReference type="Gene3D" id="2.40.30.10">
    <property type="entry name" value="Translation factors"/>
    <property type="match status" value="1"/>
</dbReference>
<dbReference type="HAMAP" id="MF_00071">
    <property type="entry name" value="LepA"/>
    <property type="match status" value="1"/>
</dbReference>
<dbReference type="InterPro" id="IPR006297">
    <property type="entry name" value="EF-4"/>
</dbReference>
<dbReference type="InterPro" id="IPR035647">
    <property type="entry name" value="EFG_III/V"/>
</dbReference>
<dbReference type="InterPro" id="IPR000640">
    <property type="entry name" value="EFG_V-like"/>
</dbReference>
<dbReference type="InterPro" id="IPR004161">
    <property type="entry name" value="EFTu-like_2"/>
</dbReference>
<dbReference type="InterPro" id="IPR031157">
    <property type="entry name" value="G_TR_CS"/>
</dbReference>
<dbReference type="InterPro" id="IPR038363">
    <property type="entry name" value="LepA_C_sf"/>
</dbReference>
<dbReference type="InterPro" id="IPR013842">
    <property type="entry name" value="LepA_CTD"/>
</dbReference>
<dbReference type="InterPro" id="IPR035654">
    <property type="entry name" value="LepA_IV"/>
</dbReference>
<dbReference type="InterPro" id="IPR027417">
    <property type="entry name" value="P-loop_NTPase"/>
</dbReference>
<dbReference type="InterPro" id="IPR005225">
    <property type="entry name" value="Small_GTP-bd"/>
</dbReference>
<dbReference type="InterPro" id="IPR000795">
    <property type="entry name" value="T_Tr_GTP-bd_dom"/>
</dbReference>
<dbReference type="InterPro" id="IPR009000">
    <property type="entry name" value="Transl_B-barrel_sf"/>
</dbReference>
<dbReference type="NCBIfam" id="TIGR01393">
    <property type="entry name" value="lepA"/>
    <property type="match status" value="1"/>
</dbReference>
<dbReference type="NCBIfam" id="TIGR00231">
    <property type="entry name" value="small_GTP"/>
    <property type="match status" value="1"/>
</dbReference>
<dbReference type="PANTHER" id="PTHR43512:SF4">
    <property type="entry name" value="TRANSLATION FACTOR GUF1 HOMOLOG, CHLOROPLASTIC"/>
    <property type="match status" value="1"/>
</dbReference>
<dbReference type="PANTHER" id="PTHR43512">
    <property type="entry name" value="TRANSLATION FACTOR GUF1-RELATED"/>
    <property type="match status" value="1"/>
</dbReference>
<dbReference type="Pfam" id="PF00679">
    <property type="entry name" value="EFG_C"/>
    <property type="match status" value="1"/>
</dbReference>
<dbReference type="Pfam" id="PF00009">
    <property type="entry name" value="GTP_EFTU"/>
    <property type="match status" value="1"/>
</dbReference>
<dbReference type="Pfam" id="PF03144">
    <property type="entry name" value="GTP_EFTU_D2"/>
    <property type="match status" value="1"/>
</dbReference>
<dbReference type="Pfam" id="PF06421">
    <property type="entry name" value="LepA_C"/>
    <property type="match status" value="1"/>
</dbReference>
<dbReference type="PRINTS" id="PR00315">
    <property type="entry name" value="ELONGATNFCT"/>
</dbReference>
<dbReference type="SUPFAM" id="SSF54980">
    <property type="entry name" value="EF-G C-terminal domain-like"/>
    <property type="match status" value="2"/>
</dbReference>
<dbReference type="SUPFAM" id="SSF52540">
    <property type="entry name" value="P-loop containing nucleoside triphosphate hydrolases"/>
    <property type="match status" value="1"/>
</dbReference>
<dbReference type="SUPFAM" id="SSF50447">
    <property type="entry name" value="Translation proteins"/>
    <property type="match status" value="1"/>
</dbReference>
<dbReference type="PROSITE" id="PS00301">
    <property type="entry name" value="G_TR_1"/>
    <property type="match status" value="1"/>
</dbReference>
<dbReference type="PROSITE" id="PS51722">
    <property type="entry name" value="G_TR_2"/>
    <property type="match status" value="1"/>
</dbReference>
<accession>B8CQJ7</accession>
<sequence length="596" mass="65864">MKHIRNFSIIAHIDHGKSTLSDRLIHECGGLTDREMAAQVLDSMDIERERGITIKAQSVTLDYKANDGETYQLNFIDTPGHVDFSYEVSRSLAACEGALLVVDAGQGVEAQTLANCYTALEMDMDVVPVLNKIDLPQADPDRVAEEIEDIVGIEAADAVRCSAKTGVGIKDVLEVIVEQIPPPEGDEEGPLQALIIDSWFDSYLGVVSLVRIKNGVLKKGDKFKVMSTGQNHTADRVGIFTPKQTDTPELKTGEVGFVIAGIKEIHGAPVGDTLTHAKHGALEPLPGFKKVKPQVYAGLFPISTDDYESFRDALNKLSLNDASLFFEPETSSALGFGFRIGFLGLLHMEIIQERLEREYNLELITTAPTVVYEIVQTNGETIYVDNPSDLPAINNIEEMREPIVETNILVPKEYLGNVITLCVEKRGVQTNLVYHGNQVALTYELPMAEVVMDFFDRLKSTSRGYASLEYNFVRFEPADMVRLDILINGDRVDALAMIIHKGLIRSKGLALVNKMKELIPRQMFDIAVQAAVGSQIIARSSIKAMRKDVTAKCYGGDVSRKKKLLQKQKDGKKRMKQVGNVEVPQEAFLAVLKLND</sequence>
<evidence type="ECO:0000255" key="1">
    <source>
        <dbReference type="HAMAP-Rule" id="MF_00071"/>
    </source>
</evidence>
<gene>
    <name evidence="1" type="primary">lepA</name>
    <name type="ordered locus">swp_3782</name>
</gene>
<proteinExistence type="inferred from homology"/>
<comment type="function">
    <text evidence="1">Required for accurate and efficient protein synthesis under certain stress conditions. May act as a fidelity factor of the translation reaction, by catalyzing a one-codon backward translocation of tRNAs on improperly translocated ribosomes. Back-translocation proceeds from a post-translocation (POST) complex to a pre-translocation (PRE) complex, thus giving elongation factor G a second chance to translocate the tRNAs correctly. Binds to ribosomes in a GTP-dependent manner.</text>
</comment>
<comment type="catalytic activity">
    <reaction evidence="1">
        <text>GTP + H2O = GDP + phosphate + H(+)</text>
        <dbReference type="Rhea" id="RHEA:19669"/>
        <dbReference type="ChEBI" id="CHEBI:15377"/>
        <dbReference type="ChEBI" id="CHEBI:15378"/>
        <dbReference type="ChEBI" id="CHEBI:37565"/>
        <dbReference type="ChEBI" id="CHEBI:43474"/>
        <dbReference type="ChEBI" id="CHEBI:58189"/>
        <dbReference type="EC" id="3.6.5.n1"/>
    </reaction>
</comment>
<comment type="subcellular location">
    <subcellularLocation>
        <location evidence="1">Cell inner membrane</location>
        <topology evidence="1">Peripheral membrane protein</topology>
        <orientation evidence="1">Cytoplasmic side</orientation>
    </subcellularLocation>
</comment>
<comment type="similarity">
    <text evidence="1">Belongs to the TRAFAC class translation factor GTPase superfamily. Classic translation factor GTPase family. LepA subfamily.</text>
</comment>
<reference key="1">
    <citation type="journal article" date="2008" name="PLoS ONE">
        <title>Environmental adaptation: genomic analysis of the piezotolerant and psychrotolerant deep-sea iron reducing bacterium Shewanella piezotolerans WP3.</title>
        <authorList>
            <person name="Wang F."/>
            <person name="Wang J."/>
            <person name="Jian H."/>
            <person name="Zhang B."/>
            <person name="Li S."/>
            <person name="Wang F."/>
            <person name="Zeng X."/>
            <person name="Gao L."/>
            <person name="Bartlett D.H."/>
            <person name="Yu J."/>
            <person name="Hu S."/>
            <person name="Xiao X."/>
        </authorList>
    </citation>
    <scope>NUCLEOTIDE SEQUENCE [LARGE SCALE GENOMIC DNA]</scope>
    <source>
        <strain>WP3 / JCM 13877</strain>
    </source>
</reference>